<organismHost>
    <name type="scientific">Homo sapiens</name>
    <name type="common">Human</name>
    <dbReference type="NCBI Taxonomy" id="9606"/>
</organismHost>
<protein>
    <recommendedName>
        <fullName evidence="1">Protein VP3</fullName>
    </recommendedName>
    <domain>
        <recommendedName>
            <fullName evidence="1">2',5'-phosphodiesterase</fullName>
            <ecNumber evidence="1">3.1.4.-</ecNumber>
        </recommendedName>
    </domain>
    <domain>
        <recommendedName>
            <fullName evidence="1">mRNA guanylyltransferase</fullName>
            <ecNumber evidence="1">2.7.7.50</ecNumber>
        </recommendedName>
    </domain>
    <domain>
        <recommendedName>
            <fullName evidence="1">mRNA (guanine-N(7))-methyltransferase</fullName>
            <ecNumber evidence="1">2.1.1.56</ecNumber>
        </recommendedName>
    </domain>
</protein>
<reference key="1">
    <citation type="journal article" date="2004" name="J. Gen. Virol.">
        <title>Sequence analysis of the guanylyltransferase (VP3) of group A rotaviruses.</title>
        <authorList>
            <person name="Cook J.P."/>
            <person name="McCrae M.A."/>
        </authorList>
    </citation>
    <scope>NUCLEOTIDE SEQUENCE [GENOMIC RNA]</scope>
</reference>
<reference key="2">
    <citation type="journal article" date="2002" name="J. Virol.">
        <title>Frequent reassortments may explain the genetic heterogeneity of rotaviruses: analysis of Finnish rotavirus strains.</title>
        <authorList>
            <person name="Maunula L."/>
            <person name="Von Bonsdorff C.H."/>
        </authorList>
    </citation>
    <scope>NUCLEOTIDE SEQUENCE [GENOMIC RNA] OF 154-267</scope>
</reference>
<name>VP3_ROTHW</name>
<feature type="chain" id="PRO_0000368087" description="Protein VP3">
    <location>
        <begin position="1"/>
        <end position="835"/>
    </location>
</feature>
<feature type="region of interest" description="N7-methyltransferase activity" evidence="1">
    <location>
        <begin position="171"/>
        <end position="245"/>
    </location>
</feature>
<feature type="region of interest" description="2'-O-methyltransferase activity" evidence="1">
    <location>
        <begin position="246"/>
        <end position="428"/>
    </location>
</feature>
<feature type="region of interest" description="N7-methyltransferase activity" evidence="1">
    <location>
        <begin position="429"/>
        <end position="555"/>
    </location>
</feature>
<feature type="region of interest" description="GTase/RTPase activity" evidence="1">
    <location>
        <begin position="556"/>
        <end position="692"/>
    </location>
</feature>
<feature type="region of interest" description="2'-5'-phosphodiesterase activity" evidence="1">
    <location>
        <begin position="693"/>
        <end position="835"/>
    </location>
</feature>
<feature type="active site" description="For 2'-5'-phosphodiesterase activity" evidence="1">
    <location>
        <position position="718"/>
    </location>
</feature>
<feature type="active site" description="For 2'-5'-phosphodiesterase activity" evidence="1">
    <location>
        <position position="720"/>
    </location>
</feature>
<feature type="active site" description="For 2'-5'-phosphodiesterase activity" evidence="1">
    <location>
        <position position="797"/>
    </location>
</feature>
<feature type="active site" description="For 2'-5'-phosphodiesterase activity" evidence="1">
    <location>
        <position position="799"/>
    </location>
</feature>
<evidence type="ECO:0000255" key="1">
    <source>
        <dbReference type="HAMAP-Rule" id="MF_04128"/>
    </source>
</evidence>
<comment type="function">
    <text evidence="1">Multifunctional enzyme involved in mRNA capping. Catalyzes the formation of the 5' cap structure on the viral plus-strand transcripts. Specifically binds to GTP and displays guanylyltransferase and methyltransferase activities. Has affinity for ssRNA but not for dsRNA. Capping activity is non-specific and caps RNAs that initiate with either a G or an A residue. Together with VP1 polymerase, forms a VP1-VP3 complex positioned near the channels situated at each of the five-fold vertices of the core. Following infection, the outermost layer of the virus is lost, leaving a double-layered particle (DLP) made up of the core and VP6 shell. VP1 then catalyzes the transcription of fully conservative plus-strand genomic RNAs that are capped by VP3 and extruded through the DLP's channels into the cytoplasm where they function as mRNAs for translation of viral proteins. DLPs probably have an RNA triphosphatase activity as well, whereas open cores do not.</text>
</comment>
<comment type="function">
    <text evidence="1">Counteracts the host innate immune response thanks to its phosphodiesterase that degrades the 5'-triphosphorylated, 2'-5' linked adenylate oligomers produced by the host cell IFN-inducible 2',5'-oligoadenylate synthetase (OAS). The host RNaseL is therefore not activated.</text>
</comment>
<comment type="catalytic activity">
    <reaction evidence="1">
        <text>a 5'-end diphospho-ribonucleoside in mRNA + GTP + H(+) = a 5'-end (5'-triphosphoguanosine)-ribonucleoside in mRNA + diphosphate</text>
        <dbReference type="Rhea" id="RHEA:67012"/>
        <dbReference type="Rhea" id="RHEA-COMP:17165"/>
        <dbReference type="Rhea" id="RHEA-COMP:17166"/>
        <dbReference type="ChEBI" id="CHEBI:15378"/>
        <dbReference type="ChEBI" id="CHEBI:33019"/>
        <dbReference type="ChEBI" id="CHEBI:37565"/>
        <dbReference type="ChEBI" id="CHEBI:167616"/>
        <dbReference type="ChEBI" id="CHEBI:167617"/>
        <dbReference type="EC" id="2.7.7.50"/>
    </reaction>
</comment>
<comment type="catalytic activity">
    <reaction evidence="1">
        <text>a 5'-end (5'-triphosphoguanosine)-ribonucleoside in mRNA + S-adenosyl-L-methionine = a 5'-end (N(7)-methyl 5'-triphosphoguanosine)-ribonucleoside in mRNA + S-adenosyl-L-homocysteine</text>
        <dbReference type="Rhea" id="RHEA:67008"/>
        <dbReference type="Rhea" id="RHEA-COMP:17166"/>
        <dbReference type="Rhea" id="RHEA-COMP:17167"/>
        <dbReference type="ChEBI" id="CHEBI:57856"/>
        <dbReference type="ChEBI" id="CHEBI:59789"/>
        <dbReference type="ChEBI" id="CHEBI:156461"/>
        <dbReference type="ChEBI" id="CHEBI:167617"/>
        <dbReference type="EC" id="2.1.1.56"/>
    </reaction>
</comment>
<comment type="catalytic activity">
    <reaction evidence="1">
        <text>5'-triphosphoadenylyl-(2'-&gt;5')-adenylyl-(2'-&gt;5')-adenosine + 2 H2O = 2 AMP + ATP + 2 H(+)</text>
        <dbReference type="Rhea" id="RHEA:45964"/>
        <dbReference type="ChEBI" id="CHEBI:15377"/>
        <dbReference type="ChEBI" id="CHEBI:15378"/>
        <dbReference type="ChEBI" id="CHEBI:30616"/>
        <dbReference type="ChEBI" id="CHEBI:67143"/>
        <dbReference type="ChEBI" id="CHEBI:456215"/>
    </reaction>
</comment>
<comment type="subunit">
    <text evidence="1">Interacts with VP1. Interacts with VP2.</text>
</comment>
<comment type="subcellular location">
    <subcellularLocation>
        <location evidence="1">Virion</location>
    </subcellularLocation>
    <text evidence="1">Attached inside the inner capsid as a minor component. There are about 11 to 12 copies per virion.</text>
</comment>
<comment type="domain">
    <text evidence="1">Contains a bipartite N7-methyltransferase domain, a 2'-O-methyltransferase domain and a GTase/RTPase domain. The C-terminus contains a phosphodiesterase domain that degrades the 5'-triphosphorylated, 2'-5' linked adenylate oligomers produced by the host cell in response to IFN stimulation.</text>
</comment>
<comment type="similarity">
    <text evidence="1">Belongs to the rotavirus VP3 family.</text>
</comment>
<sequence length="835" mass="97727">MKVLALRHSVAQVYADTQTYLHDDSKDEYENAFLISNLTTHNILYLNYSLKTLKILNKSGIAAVEVQSPDELFALIRCNFTYDYEDNIVYLHDYSYYTNNEIRTDQHWITKTDIIDYLLPGWKLTYVGYNGKNTRGHYNFSFICQNAATDDDIIIEYIYSNELDFQNFLLRKIKERMTTSLPIARLSNRVFRDKLFPSIVNIHKKVINVGPRNESMFTFLNFPTIKQFSNGAYIVKHTIKLKQEKWLGKRVSQFDIGQYKNMLNVVTTIYYYYNLYYSKPIIYMLGSAPSYWIYDIKQYSDFTFETWDPLDTPYSTTHHKELFFDKDVNKLKDNSVLYIDIRTDRGNMDWKEWRKIVEQQTVSNLNIAYKYLSTGKAKVCCVKLTAMDLELPITAKLLHHPTTEVRSEFYAILDVWDIITIKRFIPKGVFYAFINNVTTENVFIQPPFKLKTSPTDYIVALYALSNDLNSRQDVINLINKQKQSLITVRINNTFKDEPKVNFKNIYDWTFLPTDFELKDSIITSYDGCLGIFGLSISLSSKPTGNNHLFIINGTDKYDKLDQYANHMGVSRRSHQIRFSESATSYSGYIFRDLSNNNFNLIGTNVENSVSGHVYNALIYYRYNYAFDLKRWIYLHSIGKVAVEGGRYYEHAPIELIYACRSAKEFAILQDDLTVLRYANEIEGYINKVYSITYADDPNYFIGIKFNSIPYEYDVKIPHLTLGVLFISDNMIHDVITVLKKMKTELFKMEISTSYTYMLSDNTYVANASGVLSTYFKLYNMFYRNHITFGQSRMFIPHITLSFSNKQTVRIESTKLRINSIYLRKIKGETVFDMSE</sequence>
<dbReference type="EC" id="3.1.4.-" evidence="1"/>
<dbReference type="EC" id="2.7.7.50" evidence="1"/>
<dbReference type="EC" id="2.1.1.56" evidence="1"/>
<dbReference type="EMBL" id="AY267335">
    <property type="protein sequence ID" value="AAQ02692.1"/>
    <property type="molecule type" value="Genomic_RNA"/>
</dbReference>
<dbReference type="EMBL" id="AJ292379">
    <property type="protein sequence ID" value="CAB98137.1"/>
    <property type="molecule type" value="Genomic_RNA"/>
</dbReference>
<dbReference type="SMR" id="Q6WVH5"/>
<dbReference type="Proteomes" id="UP000006581">
    <property type="component" value="Genome"/>
</dbReference>
<dbReference type="GO" id="GO:0019013">
    <property type="term" value="C:viral nucleocapsid"/>
    <property type="evidence" value="ECO:0007669"/>
    <property type="project" value="UniProtKB-UniRule"/>
</dbReference>
<dbReference type="GO" id="GO:0005525">
    <property type="term" value="F:GTP binding"/>
    <property type="evidence" value="ECO:0007669"/>
    <property type="project" value="UniProtKB-UniRule"/>
</dbReference>
<dbReference type="GO" id="GO:0016787">
    <property type="term" value="F:hydrolase activity"/>
    <property type="evidence" value="ECO:0007669"/>
    <property type="project" value="UniProtKB-KW"/>
</dbReference>
<dbReference type="GO" id="GO:0004482">
    <property type="term" value="F:mRNA 5'-cap (guanine-N7-)-methyltransferase activity"/>
    <property type="evidence" value="ECO:0007669"/>
    <property type="project" value="UniProtKB-UniRule"/>
</dbReference>
<dbReference type="GO" id="GO:0004484">
    <property type="term" value="F:mRNA guanylyltransferase activity"/>
    <property type="evidence" value="ECO:0007669"/>
    <property type="project" value="UniProtKB-UniRule"/>
</dbReference>
<dbReference type="GO" id="GO:0003723">
    <property type="term" value="F:RNA binding"/>
    <property type="evidence" value="ECO:0007669"/>
    <property type="project" value="UniProtKB-UniRule"/>
</dbReference>
<dbReference type="GO" id="GO:0052170">
    <property type="term" value="P:symbiont-mediated suppression of host innate immune response"/>
    <property type="evidence" value="ECO:0007669"/>
    <property type="project" value="UniProtKB-KW"/>
</dbReference>
<dbReference type="GO" id="GO:0016032">
    <property type="term" value="P:viral process"/>
    <property type="evidence" value="ECO:0007669"/>
    <property type="project" value="UniProtKB-UniRule"/>
</dbReference>
<dbReference type="CDD" id="cd20757">
    <property type="entry name" value="capping_2-OMTase_Rotavirus"/>
    <property type="match status" value="1"/>
</dbReference>
<dbReference type="HAMAP" id="MF_04124">
    <property type="entry name" value="Rota_VP3"/>
    <property type="match status" value="1"/>
</dbReference>
<dbReference type="HAMAP" id="MF_04128">
    <property type="entry name" value="Rota_VP3_A"/>
    <property type="match status" value="1"/>
</dbReference>
<dbReference type="InterPro" id="IPR011181">
    <property type="entry name" value="VP3_Rotav"/>
</dbReference>
<dbReference type="Pfam" id="PF06929">
    <property type="entry name" value="Rotavirus_VP3"/>
    <property type="match status" value="1"/>
</dbReference>
<dbReference type="PIRSF" id="PIRSF004015">
    <property type="entry name" value="LigT_rotavirus"/>
    <property type="match status" value="1"/>
</dbReference>
<dbReference type="PROSITE" id="PS51589">
    <property type="entry name" value="SAM_MT56_VP3"/>
    <property type="match status" value="1"/>
</dbReference>
<keyword id="KW-0342">GTP-binding</keyword>
<keyword id="KW-0945">Host-virus interaction</keyword>
<keyword id="KW-0378">Hydrolase</keyword>
<keyword id="KW-1090">Inhibition of host innate immune response by virus</keyword>
<keyword id="KW-0489">Methyltransferase</keyword>
<keyword id="KW-0506">mRNA capping</keyword>
<keyword id="KW-0507">mRNA processing</keyword>
<keyword id="KW-0511">Multifunctional enzyme</keyword>
<keyword id="KW-0547">Nucleotide-binding</keyword>
<keyword id="KW-0548">Nucleotidyltransferase</keyword>
<keyword id="KW-0694">RNA-binding</keyword>
<keyword id="KW-0949">S-adenosyl-L-methionine</keyword>
<keyword id="KW-0808">Transferase</keyword>
<keyword id="KW-0899">Viral immunoevasion</keyword>
<keyword id="KW-0946">Virion</keyword>
<accession>Q6WVH5</accession>
<accession>Q9ICZ7</accession>
<proteinExistence type="inferred from homology"/>
<organism>
    <name type="scientific">Rotavirus A (strain RVA/Human/United States/Wa/1974/G1P1A[8])</name>
    <name type="common">RV-A</name>
    <dbReference type="NCBI Taxonomy" id="10962"/>
    <lineage>
        <taxon>Viruses</taxon>
        <taxon>Riboviria</taxon>
        <taxon>Orthornavirae</taxon>
        <taxon>Duplornaviricota</taxon>
        <taxon>Resentoviricetes</taxon>
        <taxon>Reovirales</taxon>
        <taxon>Sedoreoviridae</taxon>
        <taxon>Rotavirus</taxon>
        <taxon>Rotavirus A</taxon>
    </lineage>
</organism>